<keyword id="KW-1048">Host nucleus</keyword>
<keyword id="KW-0964">Secreted</keyword>
<keyword id="KW-0732">Signal</keyword>
<keyword id="KW-0843">Virulence</keyword>
<protein>
    <recommendedName>
        <fullName evidence="4">Secreted RxLR effector protein 118</fullName>
    </recommendedName>
</protein>
<dbReference type="SMR" id="P0CV48"/>
<dbReference type="GO" id="GO:0005576">
    <property type="term" value="C:extracellular region"/>
    <property type="evidence" value="ECO:0007669"/>
    <property type="project" value="UniProtKB-SubCell"/>
</dbReference>
<dbReference type="GO" id="GO:0042025">
    <property type="term" value="C:host cell nucleus"/>
    <property type="evidence" value="ECO:0007669"/>
    <property type="project" value="UniProtKB-SubCell"/>
</dbReference>
<feature type="signal peptide" evidence="1">
    <location>
        <begin position="1"/>
        <end position="21"/>
    </location>
</feature>
<feature type="chain" id="PRO_0000447957" description="Secreted RxLR effector protein 118">
    <location>
        <begin position="22"/>
        <end position="382"/>
    </location>
</feature>
<feature type="region of interest" description="Disordered" evidence="2">
    <location>
        <begin position="308"/>
        <end position="382"/>
    </location>
</feature>
<feature type="short sequence motif" description="RxLR-dEER" evidence="6">
    <location>
        <begin position="48"/>
        <end position="65"/>
    </location>
</feature>
<feature type="compositionally biased region" description="Polar residues" evidence="2">
    <location>
        <begin position="310"/>
        <end position="323"/>
    </location>
</feature>
<reference key="1">
    <citation type="journal article" date="2018" name="Front. Plant Sci.">
        <title>In planta functional analysis and subcellular localization of the oomycete pathogen Plasmopara viticola candidate RXLR effector repertoire.</title>
        <authorList>
            <person name="Liu Y."/>
            <person name="Lan X."/>
            <person name="Song S."/>
            <person name="Yin L."/>
            <person name="Dry I.B."/>
            <person name="Qu J."/>
            <person name="Xiang J."/>
            <person name="Lu J."/>
        </authorList>
    </citation>
    <scope>NUCLEOTIDE SEQUENCE [MRNA]</scope>
    <scope>DOMAIN</scope>
    <scope>FUNCTION</scope>
    <scope>SUBCELLULAR LOCATION</scope>
</reference>
<evidence type="ECO:0000255" key="1"/>
<evidence type="ECO:0000256" key="2">
    <source>
        <dbReference type="SAM" id="MobiDB-lite"/>
    </source>
</evidence>
<evidence type="ECO:0000269" key="3">
    <source>
    </source>
</evidence>
<evidence type="ECO:0000303" key="4">
    <source>
    </source>
</evidence>
<evidence type="ECO:0000305" key="5"/>
<evidence type="ECO:0000305" key="6">
    <source>
    </source>
</evidence>
<gene>
    <name evidence="4" type="primary">RXLR118</name>
</gene>
<organism>
    <name type="scientific">Plasmopara viticola</name>
    <name type="common">Downy mildew of grapevine</name>
    <name type="synonym">Botrytis viticola</name>
    <dbReference type="NCBI Taxonomy" id="143451"/>
    <lineage>
        <taxon>Eukaryota</taxon>
        <taxon>Sar</taxon>
        <taxon>Stramenopiles</taxon>
        <taxon>Oomycota</taxon>
        <taxon>Peronosporales</taxon>
        <taxon>Peronosporaceae</taxon>
        <taxon>Plasmopara</taxon>
    </lineage>
</organism>
<accession>P0CV48</accession>
<sequence>MRGAYYVTIALLVVASSQISAEFGHQLQAYDHDVTAADDAVAETLAKRSLRGSRDVSNDVAIEERTKYSNVIEDGIEMLLRAAEALKEMPRAAVAVKDMPRAEEAVEKMAPIAEQDLLKNVIGADEASKRRRAPHGISTQRTLALPFKEWNTELKQMRGGSVLKKYRSKIKSVHQAFVDLCDKDLNPTVTETALLWGMFDWDVKSYSASAHKHNLIRLAKRYVHKDVVQIQSDDLAWNRWNEVSIPLRIGALNILLNLHYQRWVRMYNIFEQYQSALIGTPVSLELSLGGTTGTSSATALDKHLEVPMNKASTSKGKSSVFTRSSKRAFDSKTGTTSPSSKHSKMQRSSSPLTESTTSGDDPVFTKRSRHGVAVTSLSSISN</sequence>
<name>RL118_PLAVT</name>
<proteinExistence type="evidence at transcript level"/>
<comment type="function">
    <text evidence="3">Secreted effector that completely suppresses the host cell death induced by cell death-inducing proteins.</text>
</comment>
<comment type="subcellular location">
    <subcellularLocation>
        <location evidence="3">Secreted</location>
    </subcellularLocation>
    <subcellularLocation>
        <location evidence="3">Host nucleus</location>
    </subcellularLocation>
</comment>
<comment type="domain">
    <text evidence="6">The RxLR-dEER motif acts to carry the protein into the host cell cytoplasm through binding to cell surface phosphatidylinositol-3-phosphate.</text>
</comment>
<comment type="similarity">
    <text evidence="5">Belongs to the RxLR effector family.</text>
</comment>